<proteinExistence type="evidence at protein level"/>
<feature type="chain" id="PRO_0000199200" description="B-phycoerythrin beta chain">
    <location>
        <begin position="1"/>
        <end position="177"/>
    </location>
</feature>
<feature type="binding site" evidence="1 2">
    <location>
        <position position="28"/>
    </location>
    <ligand>
        <name>(2R,3E)-phycoerythrobilin</name>
        <dbReference type="ChEBI" id="CHEBI:85276"/>
        <label>3</label>
    </ligand>
</feature>
<feature type="binding site" evidence="1 2">
    <location>
        <position position="35"/>
    </location>
    <ligand>
        <name>(2R,3E)-phycoerythrobilin</name>
        <dbReference type="ChEBI" id="CHEBI:85276"/>
        <label>3</label>
    </ligand>
</feature>
<feature type="binding site" evidence="1 2">
    <location>
        <position position="39"/>
    </location>
    <ligand>
        <name>(2R,3E)-phycoerythrobilin</name>
        <dbReference type="ChEBI" id="CHEBI:85276"/>
        <label>3</label>
    </ligand>
</feature>
<feature type="binding site" description="covalent" evidence="1 2">
    <location>
        <position position="50"/>
    </location>
    <ligand>
        <name>(2R,3E)-phycoerythrobilin</name>
        <dbReference type="ChEBI" id="CHEBI:85276"/>
        <label>1</label>
    </ligand>
</feature>
<feature type="binding site" evidence="1 2">
    <location>
        <position position="54"/>
    </location>
    <ligand>
        <name>(2R,3E)-phycoerythrobilin</name>
        <dbReference type="ChEBI" id="CHEBI:85276"/>
        <label>1</label>
    </ligand>
</feature>
<feature type="binding site" description="covalent" evidence="1 2">
    <location>
        <position position="61"/>
    </location>
    <ligand>
        <name>(2R,3E)-phycoerythrobilin</name>
        <dbReference type="ChEBI" id="CHEBI:85276"/>
        <label>1</label>
    </ligand>
</feature>
<feature type="binding site" evidence="1 2">
    <location>
        <position position="72"/>
    </location>
    <ligand>
        <name>(2R,3E)-phycoerythrobilin</name>
        <dbReference type="ChEBI" id="CHEBI:85276"/>
        <label>2</label>
    </ligand>
</feature>
<feature type="binding site">
    <location>
        <begin position="77"/>
        <end position="78"/>
    </location>
    <ligand>
        <name>(2R,3E)-phycoerythrobilin</name>
        <dbReference type="ChEBI" id="CHEBI:85276"/>
        <label>2</label>
    </ligand>
</feature>
<feature type="binding site" description="covalent" evidence="1 2">
    <location>
        <position position="82"/>
    </location>
    <ligand>
        <name>(2R,3E)-phycoerythrobilin</name>
        <dbReference type="ChEBI" id="CHEBI:85276"/>
        <label>2</label>
    </ligand>
</feature>
<feature type="binding site" evidence="1 2">
    <location>
        <position position="129"/>
    </location>
    <ligand>
        <name>(2R,3E)-phycoerythrobilin</name>
        <dbReference type="ChEBI" id="CHEBI:85276"/>
        <label>1</label>
    </ligand>
</feature>
<feature type="binding site">
    <location>
        <begin position="147"/>
        <end position="148"/>
    </location>
    <ligand>
        <name>(2R,3E)-phycoerythrobilin</name>
        <dbReference type="ChEBI" id="CHEBI:85276"/>
        <label>1</label>
    </ligand>
</feature>
<feature type="binding site">
    <location>
        <begin position="154"/>
        <end position="158"/>
    </location>
    <ligand>
        <name>(2R,3E)-phycoerythrobilin</name>
        <dbReference type="ChEBI" id="CHEBI:85276"/>
        <label>3</label>
    </ligand>
</feature>
<feature type="binding site" description="covalent" evidence="1 2">
    <location>
        <position position="158"/>
    </location>
    <ligand>
        <name>(2R,3E)-phycoerythrobilin</name>
        <dbReference type="ChEBI" id="CHEBI:85276"/>
        <label>3</label>
    </ligand>
</feature>
<feature type="modified residue" description="N4-methylasparagine" evidence="1 2">
    <location>
        <position position="72"/>
    </location>
</feature>
<feature type="sequence conflict" description="In Ref. 1; AA sequence." evidence="3" ref="1">
    <original>C</original>
    <variation>V</variation>
    <location>
        <position position="50"/>
    </location>
</feature>
<feature type="sequence conflict" description="In Ref. 1; AA sequence." evidence="3" ref="1">
    <original>V</original>
    <variation>Y</variation>
    <location>
        <position position="56"/>
    </location>
</feature>
<feature type="sequence conflict" description="In Ref. 1; AA sequence." evidence="3" ref="1">
    <original>C</original>
    <variation>E</variation>
    <location>
        <position position="61"/>
    </location>
</feature>
<feature type="sequence conflict" description="In Ref. 1; AA sequence." evidence="3" ref="1">
    <original>S</original>
    <variation>H</variation>
    <location>
        <position position="65"/>
    </location>
</feature>
<feature type="sequence conflict" description="In Ref. 1; AA sequence." evidence="3" ref="1">
    <original>C</original>
    <variation>E</variation>
    <location>
        <position position="73"/>
    </location>
</feature>
<feature type="helix" evidence="4">
    <location>
        <begin position="4"/>
        <end position="9"/>
    </location>
</feature>
<feature type="strand" evidence="4">
    <location>
        <begin position="17"/>
        <end position="20"/>
    </location>
</feature>
<feature type="helix" evidence="4">
    <location>
        <begin position="22"/>
        <end position="30"/>
    </location>
</feature>
<feature type="helix" evidence="4">
    <location>
        <begin position="34"/>
        <end position="45"/>
    </location>
</feature>
<feature type="helix" evidence="4">
    <location>
        <begin position="48"/>
        <end position="62"/>
    </location>
</feature>
<feature type="helix" evidence="4">
    <location>
        <begin position="64"/>
        <end position="67"/>
    </location>
</feature>
<feature type="helix" evidence="4">
    <location>
        <begin position="76"/>
        <end position="99"/>
    </location>
</feature>
<feature type="helix" evidence="4">
    <location>
        <begin position="103"/>
        <end position="108"/>
    </location>
</feature>
<feature type="turn" evidence="4">
    <location>
        <begin position="109"/>
        <end position="112"/>
    </location>
</feature>
<feature type="helix" evidence="4">
    <location>
        <begin position="113"/>
        <end position="120"/>
    </location>
</feature>
<feature type="helix" evidence="4">
    <location>
        <begin position="124"/>
        <end position="142"/>
    </location>
</feature>
<feature type="strand" evidence="4">
    <location>
        <begin position="146"/>
        <end position="148"/>
    </location>
</feature>
<feature type="helix" evidence="4">
    <location>
        <begin position="159"/>
        <end position="176"/>
    </location>
</feature>
<name>PHEB_RHDS2</name>
<accession>P27198</accession>
<comment type="function">
    <text>Light-harvesting photosynthetic tetrapyrrole chromophore-protein from the phycobiliprotein complex.</text>
</comment>
<comment type="subunit">
    <text evidence="1 2">Heterotetramer of 2 different alpha chains and 2 identical beta chains. The subunit composition could comprise any combination of 2 out of 4 different alpha units with an invariant beta unit.</text>
</comment>
<comment type="subcellular location">
    <subcellularLocation>
        <location>Plastid</location>
        <location>Chloroplast thylakoid membrane</location>
        <topology>Peripheral membrane protein</topology>
        <orientation>Lumenal side</orientation>
    </subcellularLocation>
</comment>
<comment type="PTM">
    <text>Contains three covalently linked phycoerythrobilin chromophores.</text>
</comment>
<comment type="miscellaneous">
    <text>The light-harvesting system in Cryptophytes contains phycobiliprotein complexes. Unusually they are composed of either phycoerythrin (CPE) or phycocyanin (CPC) but never allophycocyanin (APC), with only one type of biliprotein being present in any one species. Unlike cyanobacteria or red algae these proteins are not arranged into higher-order phycobilisome complexes, and they are found in the thylakoid lumen.</text>
</comment>
<comment type="similarity">
    <text evidence="3">Belongs to the phycobiliprotein family.</text>
</comment>
<dbReference type="PDB" id="1QGW">
    <property type="method" value="X-ray"/>
    <property type="resolution" value="1.63 A"/>
    <property type="chains" value="C/D=1-177"/>
</dbReference>
<dbReference type="PDB" id="1XF6">
    <property type="method" value="X-ray"/>
    <property type="resolution" value="1.10 A"/>
    <property type="chains" value="C/D=1-177"/>
</dbReference>
<dbReference type="PDB" id="1XG0">
    <property type="method" value="X-ray"/>
    <property type="resolution" value="0.97 A"/>
    <property type="chains" value="C/D=1-177"/>
</dbReference>
<dbReference type="PDBsum" id="1QGW"/>
<dbReference type="PDBsum" id="1XF6"/>
<dbReference type="PDBsum" id="1XG0"/>
<dbReference type="SMR" id="P27198"/>
<dbReference type="iPTMnet" id="P27198"/>
<dbReference type="EvolutionaryTrace" id="P27198"/>
<dbReference type="GO" id="GO:0009535">
    <property type="term" value="C:chloroplast thylakoid membrane"/>
    <property type="evidence" value="ECO:0007669"/>
    <property type="project" value="UniProtKB-SubCell"/>
</dbReference>
<dbReference type="GO" id="GO:0030089">
    <property type="term" value="C:phycobilisome"/>
    <property type="evidence" value="ECO:0007669"/>
    <property type="project" value="InterPro"/>
</dbReference>
<dbReference type="GO" id="GO:0015979">
    <property type="term" value="P:photosynthesis"/>
    <property type="evidence" value="ECO:0007669"/>
    <property type="project" value="UniProtKB-KW"/>
</dbReference>
<dbReference type="CDD" id="cd14767">
    <property type="entry name" value="PE_beta-like"/>
    <property type="match status" value="1"/>
</dbReference>
<dbReference type="Gene3D" id="1.10.490.20">
    <property type="entry name" value="Phycocyanins"/>
    <property type="match status" value="1"/>
</dbReference>
<dbReference type="InterPro" id="IPR009050">
    <property type="entry name" value="Globin-like_sf"/>
</dbReference>
<dbReference type="InterPro" id="IPR012128">
    <property type="entry name" value="Phycobilisome_asu/bsu"/>
</dbReference>
<dbReference type="InterPro" id="IPR038719">
    <property type="entry name" value="Phycobilisome_asu/bsu_sf"/>
</dbReference>
<dbReference type="PANTHER" id="PTHR34011:SF7">
    <property type="entry name" value="C-PHYCOCYANIN BETA SUBUNIT"/>
    <property type="match status" value="1"/>
</dbReference>
<dbReference type="PANTHER" id="PTHR34011">
    <property type="entry name" value="PHYCOBILISOME 32.1 KDA LINKER POLYPEPTIDE, PHYCOCYANIN-ASSOCIATED, ROD 2-RELATED"/>
    <property type="match status" value="1"/>
</dbReference>
<dbReference type="Pfam" id="PF00502">
    <property type="entry name" value="Phycobilisome"/>
    <property type="match status" value="1"/>
</dbReference>
<dbReference type="PIRSF" id="PIRSF000081">
    <property type="entry name" value="Phycocyanin"/>
    <property type="match status" value="1"/>
</dbReference>
<dbReference type="SUPFAM" id="SSF46458">
    <property type="entry name" value="Globin-like"/>
    <property type="match status" value="1"/>
</dbReference>
<gene>
    <name type="primary">cpeB</name>
</gene>
<protein>
    <recommendedName>
        <fullName>B-phycoerythrin beta chain</fullName>
    </recommendedName>
</protein>
<evidence type="ECO:0000269" key="1">
    <source>
    </source>
</evidence>
<evidence type="ECO:0000269" key="2">
    <source>
    </source>
</evidence>
<evidence type="ECO:0000305" key="3"/>
<evidence type="ECO:0007829" key="4">
    <source>
        <dbReference type="PDB" id="1XG0"/>
    </source>
</evidence>
<reference key="1">
    <citation type="journal article" date="1992" name="Biochim. Biophys. Acta">
        <title>Amino acid sequence of the beta-subunit of phycoerythrin from the cryptophyte algae Chroomonas CS 24.</title>
        <authorList>
            <person name="Godovac-Zimmermann J."/>
            <person name="Sheil M."/>
            <person name="Wrench P.M."/>
            <person name="Hiller R.G."/>
        </authorList>
    </citation>
    <scope>PROTEIN SEQUENCE</scope>
</reference>
<reference key="2">
    <citation type="journal article" date="1999" name="Proc. Natl. Acad. Sci. U.S.A.">
        <title>Evolution of a light-harvesting protein by addition of new subunits and rearrangement of conserved elements: crystal structure of a cryptophyte phycoerythrin at 1.63-A resolution.</title>
        <authorList>
            <person name="Wilk K.E."/>
            <person name="Harrop S.J."/>
            <person name="Jankova L."/>
            <person name="Edler D."/>
            <person name="Keenan G."/>
            <person name="Sharples F."/>
            <person name="Hiller R.G."/>
            <person name="Curmi P.M."/>
        </authorList>
    </citation>
    <scope>X-RAY CRYSTALLOGRAPHY (1.63 ANGSTROMS) IN COMPLEX WITH CPEA2; CPEA3 AND PHYCOERYTHROBILIN</scope>
    <scope>SUBUNIT</scope>
    <scope>METHYLATION AT ASN-72</scope>
</reference>
<reference key="3">
    <citation type="journal article" date="2004" name="J. Mol. Biol.">
        <title>Developing a structure-function model for the cryptophyte phycoerythrin 545 using ultrahigh resolution crystallography and ultrafast laser spectroscopy.</title>
        <authorList>
            <person name="Doust A.B."/>
            <person name="Marai C.N."/>
            <person name="Harrop S.J."/>
            <person name="Wilk K.E."/>
            <person name="Curmi P.M."/>
            <person name="Scholes G.D."/>
        </authorList>
    </citation>
    <scope>X-RAY CRYSTALLOGRAPHY (0.97 ANGSTROMS) IN COMPLEX WITH CPEA2; CPEA3 AND PHYCOERYTHROBILIN</scope>
    <scope>SUBUNIT</scope>
    <scope>METHYLATION AT ASN-72</scope>
</reference>
<sequence>MLDAFSRVVTNADSKAAYVGGADLQALKKFISEGNKRLDSVNSIVSNASCIVSDAVSGMICENPSLISPSGNCYTNRRMAACLRDGEIILRYVSYALLSGDASVLEDRCLNGLKETYSSLGVPANSNARAVSIMKACAVAFVNNTASQKKLSTPQGDCSGLASEVGGYFDKVTAAIS</sequence>
<geneLocation type="chloroplast"/>
<keyword id="KW-0002">3D-structure</keyword>
<keyword id="KW-0089">Bile pigment</keyword>
<keyword id="KW-0150">Chloroplast</keyword>
<keyword id="KW-0157">Chromophore</keyword>
<keyword id="KW-0903">Direct protein sequencing</keyword>
<keyword id="KW-0249">Electron transport</keyword>
<keyword id="KW-0472">Membrane</keyword>
<keyword id="KW-0488">Methylation</keyword>
<keyword id="KW-0602">Photosynthesis</keyword>
<keyword id="KW-0934">Plastid</keyword>
<keyword id="KW-0793">Thylakoid</keyword>
<keyword id="KW-0813">Transport</keyword>
<organism>
    <name type="scientific">Rhodomonas sp. (strain CS 24)</name>
    <name type="common">Chroomonas sp. (strain CS24)</name>
    <dbReference type="NCBI Taxonomy" id="79257"/>
    <lineage>
        <taxon>Eukaryota</taxon>
        <taxon>Cryptophyceae</taxon>
        <taxon>Pyrenomonadales</taxon>
        <taxon>Pyrenomonadaceae</taxon>
        <taxon>Rhodomonas</taxon>
    </lineage>
</organism>